<organism>
    <name type="scientific">Rattus norvegicus</name>
    <name type="common">Rat</name>
    <dbReference type="NCBI Taxonomy" id="10116"/>
    <lineage>
        <taxon>Eukaryota</taxon>
        <taxon>Metazoa</taxon>
        <taxon>Chordata</taxon>
        <taxon>Craniata</taxon>
        <taxon>Vertebrata</taxon>
        <taxon>Euteleostomi</taxon>
        <taxon>Mammalia</taxon>
        <taxon>Eutheria</taxon>
        <taxon>Euarchontoglires</taxon>
        <taxon>Glires</taxon>
        <taxon>Rodentia</taxon>
        <taxon>Myomorpha</taxon>
        <taxon>Muroidea</taxon>
        <taxon>Muridae</taxon>
        <taxon>Murinae</taxon>
        <taxon>Rattus</taxon>
    </lineage>
</organism>
<feature type="chain" id="PRO_0000214827" description="Glucokinase regulatory protein">
    <location>
        <begin position="1"/>
        <end position="627"/>
    </location>
</feature>
<feature type="domain" description="SIS 1" evidence="2">
    <location>
        <begin position="90"/>
        <end position="286"/>
    </location>
</feature>
<feature type="domain" description="SIS 2" evidence="2">
    <location>
        <begin position="320"/>
        <end position="499"/>
    </location>
</feature>
<feature type="region of interest" description="Important for interaction with GCK" evidence="5">
    <location>
        <begin position="199"/>
        <end position="200"/>
    </location>
</feature>
<feature type="region of interest" description="Essential for interaction with GCK" evidence="5">
    <location>
        <begin position="463"/>
        <end position="465"/>
    </location>
</feature>
<feature type="binding site" evidence="1">
    <location>
        <begin position="109"/>
        <end position="110"/>
    </location>
    <ligand>
        <name>beta-D-fructose 1-phosphate</name>
        <dbReference type="ChEBI" id="CHEBI:138881"/>
    </ligand>
</feature>
<feature type="binding site" evidence="7 12">
    <location>
        <begin position="109"/>
        <end position="110"/>
    </location>
    <ligand>
        <name>beta-D-fructose 6-phosphate</name>
        <dbReference type="ChEBI" id="CHEBI:57634"/>
    </ligand>
</feature>
<feature type="binding site" evidence="1">
    <location>
        <position position="153"/>
    </location>
    <ligand>
        <name>beta-D-fructose 1-phosphate</name>
        <dbReference type="ChEBI" id="CHEBI:138881"/>
    </ligand>
</feature>
<feature type="binding site" evidence="1">
    <location>
        <begin position="179"/>
        <end position="181"/>
    </location>
    <ligand>
        <name>beta-D-fructose 1-phosphate</name>
        <dbReference type="ChEBI" id="CHEBI:138881"/>
    </ligand>
</feature>
<feature type="binding site" evidence="7 12">
    <location>
        <begin position="179"/>
        <end position="181"/>
    </location>
    <ligand>
        <name>beta-D-fructose 6-phosphate</name>
        <dbReference type="ChEBI" id="CHEBI:57634"/>
    </ligand>
</feature>
<feature type="binding site" evidence="1">
    <location>
        <position position="348"/>
    </location>
    <ligand>
        <name>beta-D-fructose 1-phosphate</name>
        <dbReference type="ChEBI" id="CHEBI:138881"/>
    </ligand>
</feature>
<feature type="binding site" evidence="1">
    <location>
        <position position="514"/>
    </location>
    <ligand>
        <name>beta-D-fructose 1-phosphate</name>
        <dbReference type="ChEBI" id="CHEBI:138881"/>
    </ligand>
</feature>
<feature type="binding site" evidence="7 12">
    <location>
        <position position="514"/>
    </location>
    <ligand>
        <name>beta-D-fructose 6-phosphate</name>
        <dbReference type="ChEBI" id="CHEBI:57634"/>
    </ligand>
</feature>
<feature type="turn" evidence="13">
    <location>
        <begin position="23"/>
        <end position="25"/>
    </location>
</feature>
<feature type="turn" evidence="13">
    <location>
        <begin position="30"/>
        <end position="32"/>
    </location>
</feature>
<feature type="turn" evidence="13">
    <location>
        <begin position="39"/>
        <end position="43"/>
    </location>
</feature>
<feature type="helix" evidence="13">
    <location>
        <begin position="46"/>
        <end position="58"/>
    </location>
</feature>
<feature type="helix" evidence="13">
    <location>
        <begin position="59"/>
        <end position="61"/>
    </location>
</feature>
<feature type="strand" evidence="13">
    <location>
        <begin position="66"/>
        <end position="68"/>
    </location>
</feature>
<feature type="helix" evidence="13">
    <location>
        <begin position="77"/>
        <end position="95"/>
    </location>
</feature>
<feature type="strand" evidence="13">
    <location>
        <begin position="100"/>
        <end position="107"/>
    </location>
</feature>
<feature type="helix" evidence="13">
    <location>
        <begin position="108"/>
        <end position="127"/>
    </location>
</feature>
<feature type="strand" evidence="13">
    <location>
        <begin position="134"/>
        <end position="138"/>
    </location>
</feature>
<feature type="helix" evidence="13">
    <location>
        <begin position="143"/>
        <end position="146"/>
    </location>
</feature>
<feature type="helix" evidence="13">
    <location>
        <begin position="150"/>
        <end position="154"/>
    </location>
</feature>
<feature type="helix" evidence="13">
    <location>
        <begin position="156"/>
        <end position="167"/>
    </location>
</feature>
<feature type="strand" evidence="13">
    <location>
        <begin position="171"/>
        <end position="178"/>
    </location>
</feature>
<feature type="helix" evidence="13">
    <location>
        <begin position="185"/>
        <end position="195"/>
    </location>
</feature>
<feature type="turn" evidence="13">
    <location>
        <begin position="198"/>
        <end position="200"/>
    </location>
</feature>
<feature type="strand" evidence="13">
    <location>
        <begin position="201"/>
        <end position="206"/>
    </location>
</feature>
<feature type="helix" evidence="13">
    <location>
        <begin position="211"/>
        <end position="213"/>
    </location>
</feature>
<feature type="helix" evidence="13">
    <location>
        <begin position="226"/>
        <end position="237"/>
    </location>
</feature>
<feature type="turn" evidence="13">
    <location>
        <begin position="238"/>
        <end position="240"/>
    </location>
</feature>
<feature type="strand" evidence="13">
    <location>
        <begin position="243"/>
        <end position="245"/>
    </location>
</feature>
<feature type="turn" evidence="13">
    <location>
        <begin position="258"/>
        <end position="260"/>
    </location>
</feature>
<feature type="helix" evidence="13">
    <location>
        <begin position="261"/>
        <end position="280"/>
    </location>
</feature>
<feature type="helix" evidence="13">
    <location>
        <begin position="289"/>
        <end position="307"/>
    </location>
</feature>
<feature type="helix" evidence="13">
    <location>
        <begin position="310"/>
        <end position="325"/>
    </location>
</feature>
<feature type="strand" evidence="13">
    <location>
        <begin position="330"/>
        <end position="335"/>
    </location>
</feature>
<feature type="helix" evidence="13">
    <location>
        <begin position="337"/>
        <end position="352"/>
    </location>
</feature>
<feature type="turn" evidence="13">
    <location>
        <begin position="357"/>
        <end position="359"/>
    </location>
</feature>
<feature type="strand" evidence="13">
    <location>
        <begin position="360"/>
        <end position="365"/>
    </location>
</feature>
<feature type="helix" evidence="13">
    <location>
        <begin position="397"/>
        <end position="399"/>
    </location>
</feature>
<feature type="strand" evidence="13">
    <location>
        <begin position="405"/>
        <end position="411"/>
    </location>
</feature>
<feature type="helix" evidence="13">
    <location>
        <begin position="416"/>
        <end position="425"/>
    </location>
</feature>
<feature type="strand" evidence="13">
    <location>
        <begin position="433"/>
        <end position="440"/>
    </location>
</feature>
<feature type="helix" evidence="13">
    <location>
        <begin position="447"/>
        <end position="452"/>
    </location>
</feature>
<feature type="strand" evidence="13">
    <location>
        <begin position="457"/>
        <end position="461"/>
    </location>
</feature>
<feature type="turn" evidence="13">
    <location>
        <begin position="467"/>
        <end position="469"/>
    </location>
</feature>
<feature type="helix" evidence="13">
    <location>
        <begin position="470"/>
        <end position="495"/>
    </location>
</feature>
<feature type="turn" evidence="13">
    <location>
        <begin position="496"/>
        <end position="498"/>
    </location>
</feature>
<feature type="helix" evidence="13">
    <location>
        <begin position="513"/>
        <end position="527"/>
    </location>
</feature>
<feature type="helix" evidence="13">
    <location>
        <begin position="531"/>
        <end position="543"/>
    </location>
</feature>
<feature type="helix" evidence="13">
    <location>
        <begin position="550"/>
        <end position="553"/>
    </location>
</feature>
<feature type="helix" evidence="13">
    <location>
        <begin position="557"/>
        <end position="564"/>
    </location>
</feature>
<feature type="helix" evidence="13">
    <location>
        <begin position="570"/>
        <end position="579"/>
    </location>
</feature>
<feature type="helix" evidence="13">
    <location>
        <begin position="584"/>
        <end position="592"/>
    </location>
</feature>
<feature type="helix" evidence="13">
    <location>
        <begin position="597"/>
        <end position="604"/>
    </location>
</feature>
<sequence length="627" mass="68917">MPGTKRYQHVIETPEPGEWELSGYEAAVPITEKSNPLTRNLDKADAEKIVKLLGQCDAEIFQEEGQIVPTYQRLYSESVLTTMLQVAGKVQEVLKEPDGGLVVLSGGGTSGRMAFLMSVSFNQLMKGLGQKPLYTYLIAGGDRSVVASREQTEDSALHGIEELKKVAAGKKRVVVIGISVGLSAPFVAGQMDYCMDNTAVFLPVLVGFNPVSMARNDPIEDWRSTFRQVAERMQKMQEKQEAFVLNPAIGPEGLSGSSRMKGGGATKILLETLLLAAHKTVDQGVVSSQRCLLEILRTFERAHQVTYSQSSKIATLMKQVGISLEKKGRVHLVGWQTLGIIAIMDGVECIHTFGADFQDIRGFLIGDHSDMFNQKDELTNQGPQFTFSQDDFLTSILPSLTETDTVVFIFTLDDNLTEVQALAERVREKCQNIQALVHSTVGQSLPAPLKKLFPSLISITWPLLFFDYEGTYVQKFQRELSTKWVLNTVSTGAHVLLGKILQNHMLDLRIANSKLFWRALAMLQRFSGQSKARCIESLLQAIHFPQPLSDDVRAAPISCHVQVAHEKEKVIPTALLSLLLRCSISEAKARLSAASSVCEVVRSALSGPGQKRSTQALEDPPACGTLN</sequence>
<reference key="1">
    <citation type="journal article" date="1993" name="FEBS Lett.">
        <title>Cloning and sequencing of rat liver cDNAs encoding the regulatory protein of glucokinase.</title>
        <authorList>
            <person name="Detheux M."/>
            <person name="Vandekerckhove J."/>
            <person name="van Schaftingen E."/>
        </authorList>
    </citation>
    <scope>NUCLEOTIDE SEQUENCE [MRNA]</scope>
    <scope>PARTIAL PROTEIN SEQUENCE</scope>
    <scope>TISSUE SPECIFICITY</scope>
    <source>
        <tissue>Liver</tissue>
    </source>
</reference>
<reference key="2">
    <citation type="journal article" date="1994" name="FEBS Lett.">
        <title>Cloning and sequencing of rat liver cDNAs encoding the regulatory protein of glucokinase.</title>
        <authorList>
            <person name="Detheux M."/>
            <person name="Vandekerckhove J."/>
            <person name="van Schaftingen E."/>
        </authorList>
    </citation>
    <scope>SEQUENCE REVISION</scope>
</reference>
<reference key="3">
    <citation type="journal article" date="2004" name="Genome Res.">
        <title>The status, quality, and expansion of the NIH full-length cDNA project: the Mammalian Gene Collection (MGC).</title>
        <authorList>
            <consortium name="The MGC Project Team"/>
        </authorList>
    </citation>
    <scope>NUCLEOTIDE SEQUENCE [LARGE SCALE MRNA]</scope>
    <source>
        <tissue>Lung</tissue>
    </source>
</reference>
<reference key="4">
    <citation type="journal article" date="1999" name="FEBS Lett.">
        <title>Intracellular distribution of hepatic glucokinase and glucokinase regulatory protein during the fasted to refed transition in rats.</title>
        <authorList>
            <person name="Fernandez-Novell J.M."/>
            <person name="Castel S."/>
            <person name="Bellido D."/>
            <person name="Ferrer J.C."/>
            <person name="Vilaro S."/>
            <person name="Guinovart J.J."/>
        </authorList>
    </citation>
    <scope>SUBCELLULAR LOCATION</scope>
    <scope>TISSUE SPECIFICITY</scope>
</reference>
<reference key="5">
    <citation type="journal article" date="1999" name="FEBS Lett.">
        <title>Glucokinase regulatory protein is essential for the proper subcellular localisation of liver glucokinase.</title>
        <authorList>
            <person name="de la Iglesia N."/>
            <person name="Veiga-da-Cunha M."/>
            <person name="Van Schaftingen E."/>
            <person name="Guinovart J.J."/>
            <person name="Ferrer J.C."/>
        </authorList>
    </citation>
    <scope>SUBCELLULAR LOCATION</scope>
</reference>
<reference key="6">
    <citation type="journal article" date="1999" name="J. Biol. Chem.">
        <title>Nuclear import of hepatic glucokinase depends upon glucokinase regulatory protein, whereas export is due to a nuclear export signal sequence in glucokinase.</title>
        <authorList>
            <person name="Shiota C."/>
            <person name="Coffey J."/>
            <person name="Grimsby J."/>
            <person name="Grippo J.F."/>
            <person name="Magnuson M.A."/>
        </authorList>
    </citation>
    <scope>SUBCELLULAR LOCATION</scope>
    <scope>INTERACTION WITH GCK</scope>
</reference>
<reference key="7">
    <citation type="journal article" date="2006" name="FEBS Lett.">
        <title>Glucokinase regulatory protein is associated with mitochondria in hepatocytes.</title>
        <authorList>
            <person name="Arden C."/>
            <person name="Baltrusch S."/>
            <person name="Agius L."/>
        </authorList>
    </citation>
    <scope>SUBCELLULAR LOCATION</scope>
    <scope>INTERACTION WITH GCK</scope>
</reference>
<reference evidence="12" key="8">
    <citation type="journal article" date="2013" name="Biochemistry">
        <title>Structural basis for regulation of human glucokinase by glucokinase regulatory protein.</title>
        <authorList>
            <person name="Beck T."/>
            <person name="Miller B.G."/>
        </authorList>
    </citation>
    <scope>X-RAY CRYSTALLOGRAPHY (3.4 ANGSTROMS) IN COMPLEX WITH HUMAN GCK AND BETA-D-FRUCTOSE-6-PHOSPHATE</scope>
    <scope>FUNCTION</scope>
    <scope>FRUCTOSE-6-PHOSPHATE BINDING SITES</scope>
    <scope>SUBUNIT</scope>
</reference>
<name>GCKR_RAT</name>
<dbReference type="EMBL" id="X68497">
    <property type="protein sequence ID" value="CAA48511.1"/>
    <property type="molecule type" value="mRNA"/>
</dbReference>
<dbReference type="EMBL" id="BC081843">
    <property type="protein sequence ID" value="AAH81843.1"/>
    <property type="molecule type" value="mRNA"/>
</dbReference>
<dbReference type="PIR" id="S41745">
    <property type="entry name" value="S41745"/>
</dbReference>
<dbReference type="RefSeq" id="NP_037252.1">
    <property type="nucleotide sequence ID" value="NM_013120.2"/>
</dbReference>
<dbReference type="PDB" id="4LC9">
    <property type="method" value="X-ray"/>
    <property type="resolution" value="3.40 A"/>
    <property type="chains" value="A=1-627"/>
</dbReference>
<dbReference type="PDBsum" id="4LC9"/>
<dbReference type="SMR" id="Q07071"/>
<dbReference type="FunCoup" id="Q07071">
    <property type="interactions" value="7"/>
</dbReference>
<dbReference type="IntAct" id="Q07071">
    <property type="interactions" value="3"/>
</dbReference>
<dbReference type="MINT" id="Q07071"/>
<dbReference type="STRING" id="10116.ENSRNOP00000064260"/>
<dbReference type="BindingDB" id="Q07071"/>
<dbReference type="ChEMBL" id="CHEMBL3124733"/>
<dbReference type="iPTMnet" id="Q07071"/>
<dbReference type="PhosphoSitePlus" id="Q07071"/>
<dbReference type="PaxDb" id="10116-ENSRNOP00000064260"/>
<dbReference type="Ensembl" id="ENSRNOT00000073228.3">
    <property type="protein sequence ID" value="ENSRNOP00000064260.1"/>
    <property type="gene ID" value="ENSRNOG00000048874.3"/>
</dbReference>
<dbReference type="GeneID" id="25658"/>
<dbReference type="KEGG" id="rno:25658"/>
<dbReference type="AGR" id="RGD:2671"/>
<dbReference type="CTD" id="2646"/>
<dbReference type="RGD" id="2671">
    <property type="gene designation" value="Gckr"/>
</dbReference>
<dbReference type="eggNOG" id="ENOG502QS2J">
    <property type="taxonomic scope" value="Eukaryota"/>
</dbReference>
<dbReference type="GeneTree" id="ENSGT00390000005345"/>
<dbReference type="HOGENOM" id="CLU_031122_0_0_1"/>
<dbReference type="InParanoid" id="Q07071"/>
<dbReference type="OMA" id="WESADYE"/>
<dbReference type="OrthoDB" id="311172at2759"/>
<dbReference type="PhylomeDB" id="Q07071"/>
<dbReference type="Reactome" id="R-RNO-170822">
    <property type="pathway name" value="Regulation of Glucokinase by Glucokinase Regulatory Protein"/>
</dbReference>
<dbReference type="SABIO-RK" id="Q07071"/>
<dbReference type="EvolutionaryTrace" id="Q07071"/>
<dbReference type="PRO" id="PR:Q07071"/>
<dbReference type="Proteomes" id="UP000002494">
    <property type="component" value="Chromosome 6"/>
</dbReference>
<dbReference type="Bgee" id="ENSRNOG00000048874">
    <property type="expression patterns" value="Expressed in liver and 11 other cell types or tissues"/>
</dbReference>
<dbReference type="GO" id="GO:0005737">
    <property type="term" value="C:cytoplasm"/>
    <property type="evidence" value="ECO:0000314"/>
    <property type="project" value="UniProtKB"/>
</dbReference>
<dbReference type="GO" id="GO:0005829">
    <property type="term" value="C:cytosol"/>
    <property type="evidence" value="ECO:0007669"/>
    <property type="project" value="Ensembl"/>
</dbReference>
<dbReference type="GO" id="GO:0005739">
    <property type="term" value="C:mitochondrion"/>
    <property type="evidence" value="ECO:0007669"/>
    <property type="project" value="UniProtKB-SubCell"/>
</dbReference>
<dbReference type="GO" id="GO:0005654">
    <property type="term" value="C:nucleoplasm"/>
    <property type="evidence" value="ECO:0000314"/>
    <property type="project" value="UniProtKB"/>
</dbReference>
<dbReference type="GO" id="GO:0005634">
    <property type="term" value="C:nucleus"/>
    <property type="evidence" value="ECO:0000314"/>
    <property type="project" value="BHF-UCL"/>
</dbReference>
<dbReference type="GO" id="GO:0030246">
    <property type="term" value="F:carbohydrate binding"/>
    <property type="evidence" value="ECO:0000314"/>
    <property type="project" value="RGD"/>
</dbReference>
<dbReference type="GO" id="GO:0019899">
    <property type="term" value="F:enzyme binding"/>
    <property type="evidence" value="ECO:0000315"/>
    <property type="project" value="RGD"/>
</dbReference>
<dbReference type="GO" id="GO:0004857">
    <property type="term" value="F:enzyme inhibitor activity"/>
    <property type="evidence" value="ECO:0000314"/>
    <property type="project" value="RGD"/>
</dbReference>
<dbReference type="GO" id="GO:0070095">
    <property type="term" value="F:fructose-6-phosphate binding"/>
    <property type="evidence" value="ECO:0000250"/>
    <property type="project" value="UniProtKB"/>
</dbReference>
<dbReference type="GO" id="GO:0141089">
    <property type="term" value="F:glucose sensor activity"/>
    <property type="evidence" value="ECO:0000314"/>
    <property type="project" value="BHF-UCL"/>
</dbReference>
<dbReference type="GO" id="GO:0019900">
    <property type="term" value="F:kinase binding"/>
    <property type="evidence" value="ECO:0000353"/>
    <property type="project" value="BHF-UCL"/>
</dbReference>
<dbReference type="GO" id="GO:0019210">
    <property type="term" value="F:kinase inhibitor activity"/>
    <property type="evidence" value="ECO:0000314"/>
    <property type="project" value="BHF-UCL"/>
</dbReference>
<dbReference type="GO" id="GO:0019904">
    <property type="term" value="F:protein domain specific binding"/>
    <property type="evidence" value="ECO:0000353"/>
    <property type="project" value="RGD"/>
</dbReference>
<dbReference type="GO" id="GO:1901135">
    <property type="term" value="P:carbohydrate derivative metabolic process"/>
    <property type="evidence" value="ECO:0007669"/>
    <property type="project" value="InterPro"/>
</dbReference>
<dbReference type="GO" id="GO:0006006">
    <property type="term" value="P:glucose metabolic process"/>
    <property type="evidence" value="ECO:0000304"/>
    <property type="project" value="RGD"/>
</dbReference>
<dbReference type="GO" id="GO:0001678">
    <property type="term" value="P:intracellular glucose homeostasis"/>
    <property type="evidence" value="ECO:0000266"/>
    <property type="project" value="RGD"/>
</dbReference>
<dbReference type="GO" id="GO:0006606">
    <property type="term" value="P:protein import into nucleus"/>
    <property type="evidence" value="ECO:0000314"/>
    <property type="project" value="BHF-UCL"/>
</dbReference>
<dbReference type="GO" id="GO:0034504">
    <property type="term" value="P:protein localization to nucleus"/>
    <property type="evidence" value="ECO:0000266"/>
    <property type="project" value="RGD"/>
</dbReference>
<dbReference type="GO" id="GO:0009750">
    <property type="term" value="P:response to fructose"/>
    <property type="evidence" value="ECO:0000314"/>
    <property type="project" value="BHF-UCL"/>
</dbReference>
<dbReference type="GO" id="GO:0009749">
    <property type="term" value="P:response to glucose"/>
    <property type="evidence" value="ECO:0000314"/>
    <property type="project" value="BHF-UCL"/>
</dbReference>
<dbReference type="GO" id="GO:0070328">
    <property type="term" value="P:triglyceride homeostasis"/>
    <property type="evidence" value="ECO:0000266"/>
    <property type="project" value="RGD"/>
</dbReference>
<dbReference type="GO" id="GO:0046415">
    <property type="term" value="P:urate metabolic process"/>
    <property type="evidence" value="ECO:0000266"/>
    <property type="project" value="RGD"/>
</dbReference>
<dbReference type="FunFam" id="1.10.8.1080:FF:000002">
    <property type="entry name" value="Glucokinase regulatory protein"/>
    <property type="match status" value="1"/>
</dbReference>
<dbReference type="FunFam" id="3.40.50.10490:FF:000033">
    <property type="entry name" value="Glucokinase regulatory protein"/>
    <property type="match status" value="1"/>
</dbReference>
<dbReference type="FunFam" id="3.40.50.12620:FF:000001">
    <property type="entry name" value="Glucokinase regulatory protein"/>
    <property type="match status" value="1"/>
</dbReference>
<dbReference type="Gene3D" id="1.10.8.1080">
    <property type="match status" value="1"/>
</dbReference>
<dbReference type="Gene3D" id="3.40.50.12620">
    <property type="match status" value="1"/>
</dbReference>
<dbReference type="Gene3D" id="3.40.50.10490">
    <property type="entry name" value="Glucose-6-phosphate isomerase like protein, domain 1"/>
    <property type="match status" value="1"/>
</dbReference>
<dbReference type="InterPro" id="IPR054017">
    <property type="entry name" value="GKRP_SIS_2"/>
</dbReference>
<dbReference type="InterPro" id="IPR005486">
    <property type="entry name" value="Glucokinase_regulatory_CS"/>
</dbReference>
<dbReference type="InterPro" id="IPR040190">
    <property type="entry name" value="MURQ/GCKR"/>
</dbReference>
<dbReference type="InterPro" id="IPR001347">
    <property type="entry name" value="SIS_dom"/>
</dbReference>
<dbReference type="InterPro" id="IPR046348">
    <property type="entry name" value="SIS_dom_sf"/>
</dbReference>
<dbReference type="PANTHER" id="PTHR10088">
    <property type="entry name" value="GLUCOKINASE REGULATORY PROTEIN"/>
    <property type="match status" value="1"/>
</dbReference>
<dbReference type="PANTHER" id="PTHR10088:SF4">
    <property type="entry name" value="GLUCOKINASE REGULATORY PROTEIN"/>
    <property type="match status" value="1"/>
</dbReference>
<dbReference type="Pfam" id="PF20741">
    <property type="entry name" value="GKRP-like_C"/>
    <property type="match status" value="1"/>
</dbReference>
<dbReference type="Pfam" id="PF22198">
    <property type="entry name" value="GKRP_SIS_2"/>
    <property type="match status" value="1"/>
</dbReference>
<dbReference type="Pfam" id="PF22645">
    <property type="entry name" value="GKRP_SIS_N"/>
    <property type="match status" value="1"/>
</dbReference>
<dbReference type="SUPFAM" id="SSF53697">
    <property type="entry name" value="SIS domain"/>
    <property type="match status" value="2"/>
</dbReference>
<dbReference type="PROSITE" id="PS01272">
    <property type="entry name" value="GCKR"/>
    <property type="match status" value="1"/>
</dbReference>
<dbReference type="PROSITE" id="PS51464">
    <property type="entry name" value="SIS"/>
    <property type="match status" value="2"/>
</dbReference>
<accession>Q07071</accession>
<keyword id="KW-0002">3D-structure</keyword>
<keyword id="KW-0119">Carbohydrate metabolism</keyword>
<keyword id="KW-0963">Cytoplasm</keyword>
<keyword id="KW-0903">Direct protein sequencing</keyword>
<keyword id="KW-0496">Mitochondrion</keyword>
<keyword id="KW-0539">Nucleus</keyword>
<keyword id="KW-1185">Reference proteome</keyword>
<keyword id="KW-0677">Repeat</keyword>
<protein>
    <recommendedName>
        <fullName evidence="9">Glucokinase regulatory protein</fullName>
        <shortName evidence="1">Glucokinase regulator</shortName>
    </recommendedName>
</protein>
<comment type="function">
    <text evidence="3 7">Regulates glucokinase (GCK) by forming an inactive complex with this enzyme (PubMed:23957911). Acts by promoting GCK recruitment to the nucleus, possibly to provide a reserve of GCK that can be quickly released in the cytoplasm after a meal (PubMed:10456334). The affinity of GCKR for GCK is modulated by fructose metabolites: GCKR with bound fructose 6-phosphate has increased affinity for GCK, while GCKR with bound fructose 1-phosphate has strongly decreased affinity for GCK and does not inhibit GCK activity (PubMed:23957911).</text>
</comment>
<comment type="subunit">
    <text evidence="5 7">Interacts (fructose 6-phosphate bound form) with GCK.</text>
</comment>
<comment type="subcellular location">
    <subcellularLocation>
        <location evidence="3 4 6">Cytoplasm</location>
    </subcellularLocation>
    <subcellularLocation>
        <location evidence="3 5">Nucleus</location>
    </subcellularLocation>
    <subcellularLocation>
        <location evidence="6">Mitochondrion</location>
    </subcellularLocation>
    <text evidence="3">Under low glucose concentrations, GCKR associates with GCK and the inactive complex is recruited to the hepatocyte nucleus.</text>
</comment>
<comment type="tissue specificity">
    <text evidence="4 8">Detected in liver (at protein level) (PubMed:10518020, PubMed:7682971). Not detected in muscle, brain, heart, testis, intestine or spleen (PubMed:10518020).</text>
</comment>
<comment type="domain">
    <text evidence="7">Fructose 1-phosphate and fructose 6-phosphate compete for the same binding site.</text>
</comment>
<comment type="similarity">
    <text evidence="10">Belongs to the GCKR family.</text>
</comment>
<gene>
    <name evidence="11" type="primary">Gckr</name>
</gene>
<evidence type="ECO:0000250" key="1">
    <source>
        <dbReference type="UniProtKB" id="Q14397"/>
    </source>
</evidence>
<evidence type="ECO:0000255" key="2">
    <source>
        <dbReference type="PROSITE-ProRule" id="PRU00797"/>
    </source>
</evidence>
<evidence type="ECO:0000269" key="3">
    <source>
    </source>
</evidence>
<evidence type="ECO:0000269" key="4">
    <source>
    </source>
</evidence>
<evidence type="ECO:0000269" key="5">
    <source>
    </source>
</evidence>
<evidence type="ECO:0000269" key="6">
    <source>
    </source>
</evidence>
<evidence type="ECO:0000269" key="7">
    <source>
    </source>
</evidence>
<evidence type="ECO:0000269" key="8">
    <source>
    </source>
</evidence>
<evidence type="ECO:0000303" key="9">
    <source>
    </source>
</evidence>
<evidence type="ECO:0000305" key="10"/>
<evidence type="ECO:0000312" key="11">
    <source>
        <dbReference type="RGD" id="2671"/>
    </source>
</evidence>
<evidence type="ECO:0007744" key="12">
    <source>
        <dbReference type="PDB" id="4LC9"/>
    </source>
</evidence>
<evidence type="ECO:0007829" key="13">
    <source>
        <dbReference type="PDB" id="4LC9"/>
    </source>
</evidence>
<proteinExistence type="evidence at protein level"/>